<gene>
    <name evidence="1" type="primary">flgI</name>
    <name type="ordered locus">RSp0349</name>
    <name type="ORF">RS00751</name>
</gene>
<protein>
    <recommendedName>
        <fullName evidence="1">Flagellar P-ring protein</fullName>
    </recommendedName>
    <alternativeName>
        <fullName evidence="1">Basal body P-ring protein</fullName>
    </alternativeName>
</protein>
<geneLocation type="plasmid">
    <name>megaplasmid Rsp</name>
</geneLocation>
<accession>Q8XSW8</accession>
<keyword id="KW-0975">Bacterial flagellum</keyword>
<keyword id="KW-0574">Periplasm</keyword>
<keyword id="KW-0614">Plasmid</keyword>
<keyword id="KW-1185">Reference proteome</keyword>
<keyword id="KW-0732">Signal</keyword>
<feature type="signal peptide" evidence="1">
    <location>
        <begin position="1"/>
        <end position="24"/>
    </location>
</feature>
<feature type="chain" id="PRO_0000009516" description="Flagellar P-ring protein">
    <location>
        <begin position="25"/>
        <end position="369"/>
    </location>
</feature>
<reference key="1">
    <citation type="journal article" date="2002" name="Nature">
        <title>Genome sequence of the plant pathogen Ralstonia solanacearum.</title>
        <authorList>
            <person name="Salanoubat M."/>
            <person name="Genin S."/>
            <person name="Artiguenave F."/>
            <person name="Gouzy J."/>
            <person name="Mangenot S."/>
            <person name="Arlat M."/>
            <person name="Billault A."/>
            <person name="Brottier P."/>
            <person name="Camus J.-C."/>
            <person name="Cattolico L."/>
            <person name="Chandler M."/>
            <person name="Choisne N."/>
            <person name="Claudel-Renard C."/>
            <person name="Cunnac S."/>
            <person name="Demange N."/>
            <person name="Gaspin C."/>
            <person name="Lavie M."/>
            <person name="Moisan A."/>
            <person name="Robert C."/>
            <person name="Saurin W."/>
            <person name="Schiex T."/>
            <person name="Siguier P."/>
            <person name="Thebault P."/>
            <person name="Whalen M."/>
            <person name="Wincker P."/>
            <person name="Levy M."/>
            <person name="Weissenbach J."/>
            <person name="Boucher C.A."/>
        </authorList>
    </citation>
    <scope>NUCLEOTIDE SEQUENCE [LARGE SCALE GENOMIC DNA]</scope>
    <source>
        <strain>ATCC BAA-1114 / GMI1000</strain>
    </source>
</reference>
<organism>
    <name type="scientific">Ralstonia nicotianae (strain ATCC BAA-1114 / GMI1000)</name>
    <name type="common">Ralstonia solanacearum</name>
    <dbReference type="NCBI Taxonomy" id="267608"/>
    <lineage>
        <taxon>Bacteria</taxon>
        <taxon>Pseudomonadati</taxon>
        <taxon>Pseudomonadota</taxon>
        <taxon>Betaproteobacteria</taxon>
        <taxon>Burkholderiales</taxon>
        <taxon>Burkholderiaceae</taxon>
        <taxon>Ralstonia</taxon>
        <taxon>Ralstonia solanacearum species complex</taxon>
    </lineage>
</organism>
<sequence length="369" mass="37480">MKTLHRCIGVALLALGALAGTAHADRIKDLTTIAGVRENALIGYGLVVGLDGSGDQTTQTPFTIQSFNNMLSQFGINVPSGASIQLKNTAAVVVTASLPAFVRPGQTIDVTVSSIGNAKSLRGGTLLLTPLKGVDGQLYALAQGNVVIGGAGASANGSKVQINQLGAGRIANGATVERTVQATVGEAGSIQLDTGTTDFGTVQNIVNAINKQFGADTAEAADGRTVNVRAPALAADRVGFVAKLQNIEVTPAQAAARVVVNARTGSVVMNQQVKLEPCAVAHGNLSVTISTEPVVSQPAPFSQGQTVAGARSNIEVKQQGGSLINVKGGTNLADVVKAINAIGANPQDLISILQAMKAANALRADLEII</sequence>
<dbReference type="EMBL" id="AL646053">
    <property type="protein sequence ID" value="CAD17500.1"/>
    <property type="molecule type" value="Genomic_DNA"/>
</dbReference>
<dbReference type="RefSeq" id="WP_011003661.1">
    <property type="nucleotide sequence ID" value="NC_003296.1"/>
</dbReference>
<dbReference type="SMR" id="Q8XSW8"/>
<dbReference type="STRING" id="267608.RSp0349"/>
<dbReference type="EnsemblBacteria" id="CAD17500">
    <property type="protein sequence ID" value="CAD17500"/>
    <property type="gene ID" value="RSp0349"/>
</dbReference>
<dbReference type="KEGG" id="rso:RSp0349"/>
<dbReference type="eggNOG" id="COG1706">
    <property type="taxonomic scope" value="Bacteria"/>
</dbReference>
<dbReference type="HOGENOM" id="CLU_045235_1_0_4"/>
<dbReference type="Proteomes" id="UP000001436">
    <property type="component" value="Plasmid megaplasmid Rsp"/>
</dbReference>
<dbReference type="GO" id="GO:0009428">
    <property type="term" value="C:bacterial-type flagellum basal body, distal rod, P ring"/>
    <property type="evidence" value="ECO:0007669"/>
    <property type="project" value="InterPro"/>
</dbReference>
<dbReference type="GO" id="GO:0030288">
    <property type="term" value="C:outer membrane-bounded periplasmic space"/>
    <property type="evidence" value="ECO:0007669"/>
    <property type="project" value="InterPro"/>
</dbReference>
<dbReference type="GO" id="GO:0005198">
    <property type="term" value="F:structural molecule activity"/>
    <property type="evidence" value="ECO:0007669"/>
    <property type="project" value="InterPro"/>
</dbReference>
<dbReference type="GO" id="GO:0071973">
    <property type="term" value="P:bacterial-type flagellum-dependent cell motility"/>
    <property type="evidence" value="ECO:0007669"/>
    <property type="project" value="InterPro"/>
</dbReference>
<dbReference type="HAMAP" id="MF_00416">
    <property type="entry name" value="FlgI"/>
    <property type="match status" value="1"/>
</dbReference>
<dbReference type="InterPro" id="IPR001782">
    <property type="entry name" value="Flag_FlgI"/>
</dbReference>
<dbReference type="NCBIfam" id="NF003676">
    <property type="entry name" value="PRK05303.1"/>
    <property type="match status" value="1"/>
</dbReference>
<dbReference type="PANTHER" id="PTHR30381">
    <property type="entry name" value="FLAGELLAR P-RING PERIPLASMIC PROTEIN FLGI"/>
    <property type="match status" value="1"/>
</dbReference>
<dbReference type="PANTHER" id="PTHR30381:SF0">
    <property type="entry name" value="FLAGELLAR P-RING PROTEIN"/>
    <property type="match status" value="1"/>
</dbReference>
<dbReference type="Pfam" id="PF02119">
    <property type="entry name" value="FlgI"/>
    <property type="match status" value="1"/>
</dbReference>
<dbReference type="PRINTS" id="PR01010">
    <property type="entry name" value="FLGPRINGFLGI"/>
</dbReference>
<comment type="function">
    <text evidence="1">Assembles around the rod to form the L-ring and probably protects the motor/basal body from shearing forces during rotation.</text>
</comment>
<comment type="subunit">
    <text evidence="1">The basal body constitutes a major portion of the flagellar organelle and consists of four rings (L,P,S, and M) mounted on a central rod.</text>
</comment>
<comment type="subcellular location">
    <subcellularLocation>
        <location evidence="1">Periplasm</location>
    </subcellularLocation>
    <subcellularLocation>
        <location evidence="1">Bacterial flagellum basal body</location>
    </subcellularLocation>
</comment>
<comment type="similarity">
    <text evidence="1">Belongs to the FlgI family.</text>
</comment>
<name>FLGI_RALN1</name>
<proteinExistence type="inferred from homology"/>
<evidence type="ECO:0000255" key="1">
    <source>
        <dbReference type="HAMAP-Rule" id="MF_00416"/>
    </source>
</evidence>